<comment type="function">
    <text evidence="2">Transaldolase is important for the balance of metabolites in the pentose-phosphate pathway.</text>
</comment>
<comment type="catalytic activity">
    <reaction evidence="2">
        <text>D-sedoheptulose 7-phosphate + D-glyceraldehyde 3-phosphate = D-erythrose 4-phosphate + beta-D-fructose 6-phosphate</text>
        <dbReference type="Rhea" id="RHEA:17053"/>
        <dbReference type="ChEBI" id="CHEBI:16897"/>
        <dbReference type="ChEBI" id="CHEBI:57483"/>
        <dbReference type="ChEBI" id="CHEBI:57634"/>
        <dbReference type="ChEBI" id="CHEBI:59776"/>
        <dbReference type="EC" id="2.2.1.2"/>
    </reaction>
</comment>
<comment type="pathway">
    <text evidence="2">Carbohydrate degradation; pentose phosphate pathway; D-glyceraldehyde 3-phosphate and beta-D-fructose 6-phosphate from D-ribose 5-phosphate and D-xylulose 5-phosphate (non-oxidative stage): step 2/3.</text>
</comment>
<comment type="subunit">
    <text evidence="1">Homodimer.</text>
</comment>
<comment type="subcellular location">
    <subcellularLocation>
        <location evidence="2">Cytoplasm</location>
    </subcellularLocation>
</comment>
<comment type="similarity">
    <text evidence="2">Belongs to the transaldolase family. Type 1 subfamily.</text>
</comment>
<accession>A6VYA4</accession>
<gene>
    <name evidence="2" type="primary">tal</name>
    <name type="ordered locus">Mmwyl1_2514</name>
</gene>
<organism>
    <name type="scientific">Marinomonas sp. (strain MWYL1)</name>
    <dbReference type="NCBI Taxonomy" id="400668"/>
    <lineage>
        <taxon>Bacteria</taxon>
        <taxon>Pseudomonadati</taxon>
        <taxon>Pseudomonadota</taxon>
        <taxon>Gammaproteobacteria</taxon>
        <taxon>Oceanospirillales</taxon>
        <taxon>Oceanospirillaceae</taxon>
        <taxon>Marinomonas</taxon>
    </lineage>
</organism>
<reference key="1">
    <citation type="submission" date="2007-06" db="EMBL/GenBank/DDBJ databases">
        <title>Complete sequence of Marinomonas sp. MWYL1.</title>
        <authorList>
            <consortium name="US DOE Joint Genome Institute"/>
            <person name="Copeland A."/>
            <person name="Lucas S."/>
            <person name="Lapidus A."/>
            <person name="Barry K."/>
            <person name="Glavina del Rio T."/>
            <person name="Dalin E."/>
            <person name="Tice H."/>
            <person name="Pitluck S."/>
            <person name="Kiss H."/>
            <person name="Brettin T."/>
            <person name="Bruce D."/>
            <person name="Detter J.C."/>
            <person name="Han C."/>
            <person name="Schmutz J."/>
            <person name="Larimer F."/>
            <person name="Land M."/>
            <person name="Hauser L."/>
            <person name="Kyrpides N."/>
            <person name="Kim E."/>
            <person name="Johnston A.W.B."/>
            <person name="Todd J.D."/>
            <person name="Rogers R."/>
            <person name="Wexler M."/>
            <person name="Bond P.L."/>
            <person name="Li Y."/>
            <person name="Richardson P."/>
        </authorList>
    </citation>
    <scope>NUCLEOTIDE SEQUENCE [LARGE SCALE GENOMIC DNA]</scope>
    <source>
        <strain>MWYL1</strain>
    </source>
</reference>
<dbReference type="EC" id="2.2.1.2" evidence="2"/>
<dbReference type="EMBL" id="CP000749">
    <property type="protein sequence ID" value="ABR71433.1"/>
    <property type="molecule type" value="Genomic_DNA"/>
</dbReference>
<dbReference type="SMR" id="A6VYA4"/>
<dbReference type="STRING" id="400668.Mmwyl1_2514"/>
<dbReference type="KEGG" id="mmw:Mmwyl1_2514"/>
<dbReference type="eggNOG" id="COG0176">
    <property type="taxonomic scope" value="Bacteria"/>
</dbReference>
<dbReference type="HOGENOM" id="CLU_047470_0_1_6"/>
<dbReference type="OrthoDB" id="9809101at2"/>
<dbReference type="UniPathway" id="UPA00115">
    <property type="reaction ID" value="UER00414"/>
</dbReference>
<dbReference type="GO" id="GO:0005829">
    <property type="term" value="C:cytosol"/>
    <property type="evidence" value="ECO:0007669"/>
    <property type="project" value="TreeGrafter"/>
</dbReference>
<dbReference type="GO" id="GO:0004801">
    <property type="term" value="F:transaldolase activity"/>
    <property type="evidence" value="ECO:0000250"/>
    <property type="project" value="UniProtKB"/>
</dbReference>
<dbReference type="GO" id="GO:0005975">
    <property type="term" value="P:carbohydrate metabolic process"/>
    <property type="evidence" value="ECO:0007669"/>
    <property type="project" value="InterPro"/>
</dbReference>
<dbReference type="GO" id="GO:0006098">
    <property type="term" value="P:pentose-phosphate shunt"/>
    <property type="evidence" value="ECO:0007669"/>
    <property type="project" value="UniProtKB-UniRule"/>
</dbReference>
<dbReference type="CDD" id="cd00957">
    <property type="entry name" value="Transaldolase_TalAB"/>
    <property type="match status" value="1"/>
</dbReference>
<dbReference type="FunFam" id="3.20.20.70:FF:000002">
    <property type="entry name" value="Transaldolase"/>
    <property type="match status" value="1"/>
</dbReference>
<dbReference type="Gene3D" id="3.20.20.70">
    <property type="entry name" value="Aldolase class I"/>
    <property type="match status" value="1"/>
</dbReference>
<dbReference type="HAMAP" id="MF_00492">
    <property type="entry name" value="Transaldolase_1"/>
    <property type="match status" value="1"/>
</dbReference>
<dbReference type="InterPro" id="IPR013785">
    <property type="entry name" value="Aldolase_TIM"/>
</dbReference>
<dbReference type="InterPro" id="IPR001585">
    <property type="entry name" value="TAL/FSA"/>
</dbReference>
<dbReference type="InterPro" id="IPR004730">
    <property type="entry name" value="Transaldolase_1"/>
</dbReference>
<dbReference type="InterPro" id="IPR018225">
    <property type="entry name" value="Transaldolase_AS"/>
</dbReference>
<dbReference type="NCBIfam" id="NF009001">
    <property type="entry name" value="PRK12346.1"/>
    <property type="match status" value="1"/>
</dbReference>
<dbReference type="NCBIfam" id="TIGR00874">
    <property type="entry name" value="talAB"/>
    <property type="match status" value="1"/>
</dbReference>
<dbReference type="PANTHER" id="PTHR10683">
    <property type="entry name" value="TRANSALDOLASE"/>
    <property type="match status" value="1"/>
</dbReference>
<dbReference type="PANTHER" id="PTHR10683:SF18">
    <property type="entry name" value="TRANSALDOLASE"/>
    <property type="match status" value="1"/>
</dbReference>
<dbReference type="Pfam" id="PF00923">
    <property type="entry name" value="TAL_FSA"/>
    <property type="match status" value="1"/>
</dbReference>
<dbReference type="SUPFAM" id="SSF51569">
    <property type="entry name" value="Aldolase"/>
    <property type="match status" value="1"/>
</dbReference>
<dbReference type="PROSITE" id="PS01054">
    <property type="entry name" value="TRANSALDOLASE_1"/>
    <property type="match status" value="1"/>
</dbReference>
<evidence type="ECO:0000250" key="1"/>
<evidence type="ECO:0000255" key="2">
    <source>
        <dbReference type="HAMAP-Rule" id="MF_00492"/>
    </source>
</evidence>
<sequence>MSNKLSQLKEFTTIVADTGDITAIKDFLPQDATTNPSLMLKAAQIPEYAPFLDQAVAWAKTQSNDKDQQVLDAGDKLAVIVGTEILKYVPGRISTEVDARLSFDKEATLAKARKLIALYEEAGVSRDRVLIKAASTWEGIKAAEELEKEGINCNLTLLFSFAQAQACAEAGVYLISPFVGRILDWYKKSTGQEYTAETDPGVVSVTEIYNYYKQHGYQTVVMGASFRNIGEIEQLAGCDRLTISPNLLEELKKDEGKLERKLLPTTDVKAAPAAITEAAFRWAMNEDAMATEKLSEGIRNFAADQRKLEETLRSML</sequence>
<proteinExistence type="inferred from homology"/>
<keyword id="KW-0963">Cytoplasm</keyword>
<keyword id="KW-0570">Pentose shunt</keyword>
<keyword id="KW-0704">Schiff base</keyword>
<keyword id="KW-0808">Transferase</keyword>
<feature type="chain" id="PRO_1000081396" description="Transaldolase">
    <location>
        <begin position="1"/>
        <end position="316"/>
    </location>
</feature>
<feature type="active site" description="Schiff-base intermediate with substrate" evidence="2">
    <location>
        <position position="132"/>
    </location>
</feature>
<protein>
    <recommendedName>
        <fullName evidence="2">Transaldolase</fullName>
        <ecNumber evidence="2">2.2.1.2</ecNumber>
    </recommendedName>
</protein>
<name>TAL_MARMS</name>